<reference key="1">
    <citation type="submission" date="2000-02" db="EMBL/GenBank/DDBJ databases">
        <title>Long branches in the seed plants and the root of the angiosperms.</title>
        <authorList>
            <person name="Graham S.W."/>
            <person name="Reeves P.A."/>
            <person name="Burns A."/>
            <person name="Olmstead R.G."/>
        </authorList>
    </citation>
    <scope>NUCLEOTIDE SEQUENCE [GENOMIC DNA]</scope>
</reference>
<sequence>MTIDRTYPIFTVRWLAVHGLAVPTVSFLGSISAMQFIQR</sequence>
<organism>
    <name type="scientific">Lilium superbum</name>
    <name type="common">Turk's cap lily</name>
    <name type="synonym">Lilium canadense subsp. superbum</name>
    <dbReference type="NCBI Taxonomy" id="4692"/>
    <lineage>
        <taxon>Eukaryota</taxon>
        <taxon>Viridiplantae</taxon>
        <taxon>Streptophyta</taxon>
        <taxon>Embryophyta</taxon>
        <taxon>Tracheophyta</taxon>
        <taxon>Spermatophyta</taxon>
        <taxon>Magnoliopsida</taxon>
        <taxon>Liliopsida</taxon>
        <taxon>Liliales</taxon>
        <taxon>Liliaceae</taxon>
        <taxon>Lilium</taxon>
    </lineage>
</organism>
<gene>
    <name evidence="1" type="primary">psbF</name>
</gene>
<keyword id="KW-0150">Chloroplast</keyword>
<keyword id="KW-0249">Electron transport</keyword>
<keyword id="KW-0349">Heme</keyword>
<keyword id="KW-0408">Iron</keyword>
<keyword id="KW-0472">Membrane</keyword>
<keyword id="KW-0479">Metal-binding</keyword>
<keyword id="KW-0602">Photosynthesis</keyword>
<keyword id="KW-0604">Photosystem II</keyword>
<keyword id="KW-0934">Plastid</keyword>
<keyword id="KW-0793">Thylakoid</keyword>
<keyword id="KW-0812">Transmembrane</keyword>
<keyword id="KW-1133">Transmembrane helix</keyword>
<keyword id="KW-0813">Transport</keyword>
<feature type="chain" id="PRO_0000200412" description="Cytochrome b559 subunit beta">
    <location>
        <begin position="1"/>
        <end position="39"/>
    </location>
</feature>
<feature type="transmembrane region" description="Helical" evidence="1">
    <location>
        <begin position="14"/>
        <end position="30"/>
    </location>
</feature>
<feature type="binding site" description="axial binding residue" evidence="1">
    <location>
        <position position="18"/>
    </location>
    <ligand>
        <name>heme</name>
        <dbReference type="ChEBI" id="CHEBI:30413"/>
        <note>ligand shared with alpha subunit</note>
    </ligand>
    <ligandPart>
        <name>Fe</name>
        <dbReference type="ChEBI" id="CHEBI:18248"/>
    </ligandPart>
</feature>
<comment type="function">
    <text evidence="1">This b-type cytochrome is tightly associated with the reaction center of photosystem II (PSII). PSII is a light-driven water:plastoquinone oxidoreductase that uses light energy to abstract electrons from H(2)O, generating O(2) and a proton gradient subsequently used for ATP formation. It consists of a core antenna complex that captures photons, and an electron transfer chain that converts photonic excitation into a charge separation.</text>
</comment>
<comment type="cofactor">
    <cofactor evidence="1">
        <name>heme b</name>
        <dbReference type="ChEBI" id="CHEBI:60344"/>
    </cofactor>
    <text evidence="1">With its partner (PsbE) binds heme. PSII binds additional chlorophylls, carotenoids and specific lipids.</text>
</comment>
<comment type="subunit">
    <text evidence="1">Heterodimer of an alpha subunit and a beta subunit. PSII is composed of 1 copy each of membrane proteins PsbA, PsbB, PsbC, PsbD, PsbE, PsbF, PsbH, PsbI, PsbJ, PsbK, PsbL, PsbM, PsbT, PsbX, PsbY, PsbZ, Psb30/Ycf12, at least 3 peripheral proteins of the oxygen-evolving complex and a large number of cofactors. It forms dimeric complexes.</text>
</comment>
<comment type="subcellular location">
    <subcellularLocation>
        <location evidence="1">Plastid</location>
        <location evidence="1">Chloroplast thylakoid membrane</location>
        <topology evidence="1">Single-pass membrane protein</topology>
    </subcellularLocation>
</comment>
<comment type="similarity">
    <text evidence="1">Belongs to the PsbE/PsbF family.</text>
</comment>
<evidence type="ECO:0000255" key="1">
    <source>
        <dbReference type="HAMAP-Rule" id="MF_00643"/>
    </source>
</evidence>
<accession>Q7HIU8</accession>
<geneLocation type="chloroplast"/>
<dbReference type="EMBL" id="AY007480">
    <property type="protein sequence ID" value="AAG27003.1"/>
    <property type="molecule type" value="Genomic_DNA"/>
</dbReference>
<dbReference type="RefSeq" id="YP_009130229.1">
    <property type="nucleotide sequence ID" value="NC_026787.1"/>
</dbReference>
<dbReference type="SMR" id="Q7HIU8"/>
<dbReference type="GeneID" id="24020125"/>
<dbReference type="GO" id="GO:0009535">
    <property type="term" value="C:chloroplast thylakoid membrane"/>
    <property type="evidence" value="ECO:0007669"/>
    <property type="project" value="UniProtKB-SubCell"/>
</dbReference>
<dbReference type="GO" id="GO:0009539">
    <property type="term" value="C:photosystem II reaction center"/>
    <property type="evidence" value="ECO:0007669"/>
    <property type="project" value="InterPro"/>
</dbReference>
<dbReference type="GO" id="GO:0009055">
    <property type="term" value="F:electron transfer activity"/>
    <property type="evidence" value="ECO:0007669"/>
    <property type="project" value="UniProtKB-UniRule"/>
</dbReference>
<dbReference type="GO" id="GO:0020037">
    <property type="term" value="F:heme binding"/>
    <property type="evidence" value="ECO:0007669"/>
    <property type="project" value="InterPro"/>
</dbReference>
<dbReference type="GO" id="GO:0005506">
    <property type="term" value="F:iron ion binding"/>
    <property type="evidence" value="ECO:0007669"/>
    <property type="project" value="UniProtKB-UniRule"/>
</dbReference>
<dbReference type="GO" id="GO:0009767">
    <property type="term" value="P:photosynthetic electron transport chain"/>
    <property type="evidence" value="ECO:0007669"/>
    <property type="project" value="InterPro"/>
</dbReference>
<dbReference type="HAMAP" id="MF_00643">
    <property type="entry name" value="PSII_PsbF"/>
    <property type="match status" value="1"/>
</dbReference>
<dbReference type="InterPro" id="IPR006241">
    <property type="entry name" value="PSII_cyt_b559_bsu"/>
</dbReference>
<dbReference type="InterPro" id="IPR006216">
    <property type="entry name" value="PSII_cyt_b559_CS"/>
</dbReference>
<dbReference type="InterPro" id="IPR013081">
    <property type="entry name" value="PSII_cyt_b559_N"/>
</dbReference>
<dbReference type="NCBIfam" id="TIGR01333">
    <property type="entry name" value="cyt_b559_beta"/>
    <property type="match status" value="1"/>
</dbReference>
<dbReference type="Pfam" id="PF00283">
    <property type="entry name" value="Cytochrom_B559"/>
    <property type="match status" value="1"/>
</dbReference>
<dbReference type="PIRSF" id="PIRSF000037">
    <property type="entry name" value="PsbF"/>
    <property type="match status" value="1"/>
</dbReference>
<dbReference type="SUPFAM" id="SSF161045">
    <property type="entry name" value="Cytochrome b559 subunits"/>
    <property type="match status" value="1"/>
</dbReference>
<dbReference type="PROSITE" id="PS00537">
    <property type="entry name" value="CYTOCHROME_B559"/>
    <property type="match status" value="1"/>
</dbReference>
<name>PSBF_LILSU</name>
<protein>
    <recommendedName>
        <fullName evidence="1">Cytochrome b559 subunit beta</fullName>
    </recommendedName>
    <alternativeName>
        <fullName evidence="1">PSII reaction center subunit VI</fullName>
    </alternativeName>
</protein>
<proteinExistence type="inferred from homology"/>